<keyword id="KW-0963">Cytoplasm</keyword>
<keyword id="KW-0227">DNA damage</keyword>
<keyword id="KW-0233">DNA recombination</keyword>
<keyword id="KW-0234">DNA repair</keyword>
<keyword id="KW-0238">DNA-binding</keyword>
<reference key="1">
    <citation type="submission" date="2007-11" db="EMBL/GenBank/DDBJ databases">
        <title>Complete sequence of Petroga mobilis SJ95.</title>
        <authorList>
            <consortium name="US DOE Joint Genome Institute"/>
            <person name="Copeland A."/>
            <person name="Lucas S."/>
            <person name="Lapidus A."/>
            <person name="Barry K."/>
            <person name="Glavina del Rio T."/>
            <person name="Dalin E."/>
            <person name="Tice H."/>
            <person name="Pitluck S."/>
            <person name="Meincke L."/>
            <person name="Brettin T."/>
            <person name="Bruce D."/>
            <person name="Detter J.C."/>
            <person name="Han C."/>
            <person name="Kuske C.R."/>
            <person name="Schmutz J."/>
            <person name="Larimer F."/>
            <person name="Land M."/>
            <person name="Hauser L."/>
            <person name="Kyrpides N."/>
            <person name="Mikhailova N."/>
            <person name="Noll K."/>
            <person name="Richardson P."/>
        </authorList>
    </citation>
    <scope>NUCLEOTIDE SEQUENCE [LARGE SCALE GENOMIC DNA]</scope>
    <source>
        <strain>DSM 10674 / SJ95</strain>
    </source>
</reference>
<accession>A9BIJ5</accession>
<dbReference type="EMBL" id="CP000879">
    <property type="protein sequence ID" value="ABX32158.1"/>
    <property type="molecule type" value="Genomic_DNA"/>
</dbReference>
<dbReference type="RefSeq" id="WP_012209257.1">
    <property type="nucleotide sequence ID" value="NC_010003.1"/>
</dbReference>
<dbReference type="SMR" id="A9BIJ5"/>
<dbReference type="STRING" id="403833.Pmob_1455"/>
<dbReference type="KEGG" id="pmo:Pmob_1455"/>
<dbReference type="eggNOG" id="COG0632">
    <property type="taxonomic scope" value="Bacteria"/>
</dbReference>
<dbReference type="HOGENOM" id="CLU_087936_2_1_0"/>
<dbReference type="OrthoDB" id="5293449at2"/>
<dbReference type="Proteomes" id="UP000000789">
    <property type="component" value="Chromosome"/>
</dbReference>
<dbReference type="GO" id="GO:0005737">
    <property type="term" value="C:cytoplasm"/>
    <property type="evidence" value="ECO:0007669"/>
    <property type="project" value="UniProtKB-SubCell"/>
</dbReference>
<dbReference type="GO" id="GO:0009379">
    <property type="term" value="C:Holliday junction helicase complex"/>
    <property type="evidence" value="ECO:0007669"/>
    <property type="project" value="InterPro"/>
</dbReference>
<dbReference type="GO" id="GO:0048476">
    <property type="term" value="C:Holliday junction resolvase complex"/>
    <property type="evidence" value="ECO:0007669"/>
    <property type="project" value="UniProtKB-UniRule"/>
</dbReference>
<dbReference type="GO" id="GO:0005524">
    <property type="term" value="F:ATP binding"/>
    <property type="evidence" value="ECO:0007669"/>
    <property type="project" value="InterPro"/>
</dbReference>
<dbReference type="GO" id="GO:0000400">
    <property type="term" value="F:four-way junction DNA binding"/>
    <property type="evidence" value="ECO:0007669"/>
    <property type="project" value="UniProtKB-UniRule"/>
</dbReference>
<dbReference type="GO" id="GO:0009378">
    <property type="term" value="F:four-way junction helicase activity"/>
    <property type="evidence" value="ECO:0007669"/>
    <property type="project" value="InterPro"/>
</dbReference>
<dbReference type="GO" id="GO:0006310">
    <property type="term" value="P:DNA recombination"/>
    <property type="evidence" value="ECO:0007669"/>
    <property type="project" value="UniProtKB-UniRule"/>
</dbReference>
<dbReference type="GO" id="GO:0006281">
    <property type="term" value="P:DNA repair"/>
    <property type="evidence" value="ECO:0007669"/>
    <property type="project" value="UniProtKB-UniRule"/>
</dbReference>
<dbReference type="CDD" id="cd14332">
    <property type="entry name" value="UBA_RuvA_C"/>
    <property type="match status" value="1"/>
</dbReference>
<dbReference type="Gene3D" id="1.10.150.20">
    <property type="entry name" value="5' to 3' exonuclease, C-terminal subdomain"/>
    <property type="match status" value="1"/>
</dbReference>
<dbReference type="Gene3D" id="1.10.8.10">
    <property type="entry name" value="DNA helicase RuvA subunit, C-terminal domain"/>
    <property type="match status" value="1"/>
</dbReference>
<dbReference type="HAMAP" id="MF_00031">
    <property type="entry name" value="DNA_HJ_migration_RuvA"/>
    <property type="match status" value="1"/>
</dbReference>
<dbReference type="InterPro" id="IPR003583">
    <property type="entry name" value="Hlx-hairpin-Hlx_DNA-bd_motif"/>
</dbReference>
<dbReference type="InterPro" id="IPR000085">
    <property type="entry name" value="RuvA"/>
</dbReference>
<dbReference type="InterPro" id="IPR010994">
    <property type="entry name" value="RuvA_2-like"/>
</dbReference>
<dbReference type="InterPro" id="IPR011114">
    <property type="entry name" value="RuvA_C"/>
</dbReference>
<dbReference type="InterPro" id="IPR036267">
    <property type="entry name" value="RuvA_C_sf"/>
</dbReference>
<dbReference type="NCBIfam" id="TIGR00084">
    <property type="entry name" value="ruvA"/>
    <property type="match status" value="1"/>
</dbReference>
<dbReference type="Pfam" id="PF14520">
    <property type="entry name" value="HHH_5"/>
    <property type="match status" value="1"/>
</dbReference>
<dbReference type="Pfam" id="PF07499">
    <property type="entry name" value="RuvA_C"/>
    <property type="match status" value="1"/>
</dbReference>
<dbReference type="SMART" id="SM00278">
    <property type="entry name" value="HhH1"/>
    <property type="match status" value="2"/>
</dbReference>
<dbReference type="SUPFAM" id="SSF46929">
    <property type="entry name" value="DNA helicase RuvA subunit, C-terminal domain"/>
    <property type="match status" value="1"/>
</dbReference>
<dbReference type="SUPFAM" id="SSF47781">
    <property type="entry name" value="RuvA domain 2-like"/>
    <property type="match status" value="1"/>
</dbReference>
<gene>
    <name evidence="1" type="primary">ruvA</name>
    <name type="ordered locus">Pmob_1455</name>
</gene>
<name>RUVA_PETMO</name>
<feature type="chain" id="PRO_1000195168" description="Holliday junction branch migration complex subunit RuvA">
    <location>
        <begin position="1"/>
        <end position="190"/>
    </location>
</feature>
<feature type="region of interest" description="Domain I" evidence="1">
    <location>
        <begin position="1"/>
        <end position="63"/>
    </location>
</feature>
<feature type="region of interest" description="Domain II" evidence="1">
    <location>
        <begin position="64"/>
        <end position="138"/>
    </location>
</feature>
<feature type="region of interest" description="Flexible linker" evidence="1">
    <location>
        <begin position="138"/>
        <end position="142"/>
    </location>
</feature>
<feature type="region of interest" description="Domain III" evidence="1">
    <location>
        <begin position="143"/>
        <end position="190"/>
    </location>
</feature>
<sequence length="190" mass="21708">MIRKINATIEDFEDEKVLIKIGVLTLEAYPSLNVIRYFKKGDQYEFFASLEISEWNTSLYIFKDKIERDVFESLKKVSKIGPRIASKILRKTDAEEFIQMINSQDTALLSSLPGIGKKTAERLISELSNSFSAYSTGADTQSYGNNNLKEAIEALETLGFQRYEIMKVIGQLDLEDLKTEEIIKECLTRL</sequence>
<comment type="function">
    <text evidence="1">The RuvA-RuvB-RuvC complex processes Holliday junction (HJ) DNA during genetic recombination and DNA repair, while the RuvA-RuvB complex plays an important role in the rescue of blocked DNA replication forks via replication fork reversal (RFR). RuvA specifically binds to HJ cruciform DNA, conferring on it an open structure. The RuvB hexamer acts as an ATP-dependent pump, pulling dsDNA into and through the RuvAB complex. HJ branch migration allows RuvC to scan DNA until it finds its consensus sequence, where it cleaves and resolves the cruciform DNA.</text>
</comment>
<comment type="subunit">
    <text evidence="1">Homotetramer. Forms an RuvA(8)-RuvB(12)-Holliday junction (HJ) complex. HJ DNA is sandwiched between 2 RuvA tetramers; dsDNA enters through RuvA and exits via RuvB. An RuvB hexamer assembles on each DNA strand where it exits the tetramer. Each RuvB hexamer is contacted by two RuvA subunits (via domain III) on 2 adjacent RuvB subunits; this complex drives branch migration. In the full resolvosome a probable DNA-RuvA(4)-RuvB(12)-RuvC(2) complex forms which resolves the HJ.</text>
</comment>
<comment type="subcellular location">
    <subcellularLocation>
        <location evidence="1">Cytoplasm</location>
    </subcellularLocation>
</comment>
<comment type="domain">
    <text evidence="1">Has three domains with a flexible linker between the domains II and III and assumes an 'L' shape. Domain III is highly mobile and contacts RuvB.</text>
</comment>
<comment type="similarity">
    <text evidence="1">Belongs to the RuvA family.</text>
</comment>
<evidence type="ECO:0000255" key="1">
    <source>
        <dbReference type="HAMAP-Rule" id="MF_00031"/>
    </source>
</evidence>
<protein>
    <recommendedName>
        <fullName evidence="1">Holliday junction branch migration complex subunit RuvA</fullName>
    </recommendedName>
</protein>
<organism>
    <name type="scientific">Petrotoga mobilis (strain DSM 10674 / SJ95)</name>
    <dbReference type="NCBI Taxonomy" id="403833"/>
    <lineage>
        <taxon>Bacteria</taxon>
        <taxon>Thermotogati</taxon>
        <taxon>Thermotogota</taxon>
        <taxon>Thermotogae</taxon>
        <taxon>Petrotogales</taxon>
        <taxon>Petrotogaceae</taxon>
        <taxon>Petrotoga</taxon>
    </lineage>
</organism>
<proteinExistence type="inferred from homology"/>